<evidence type="ECO:0000255" key="1">
    <source>
        <dbReference type="HAMAP-Rule" id="MF_00332"/>
    </source>
</evidence>
<evidence type="ECO:0000256" key="2">
    <source>
        <dbReference type="SAM" id="MobiDB-lite"/>
    </source>
</evidence>
<sequence>MSKVIGIDLGTTNSCVAVYENGEAKIIPNKEGKNTTPSIVAYTDKGEVLVGDPAKRQAITNPEKTIYSIKRIMGLMMNEPNAKEAQSKVGYKIVDRNGAAAVEIAGKVYTPQEISAKILGKLKADAEEYLGDKVTDAVITVPAYFNDAQRKATQEAGTIAGLNVLRIINEPTAASLAYGLDKKGEEKVLVYDLGGGTFDVTVLEIGDGTFEVLSTDGNAFLGGDDFDNAIIDWLAKEFKDENGFDIKNDKMALQRLKDAAENAKKELSSAESTEINLPFISMGNAGPIHLVKSLTRAKFESMTEKLIDETLDHIKIALKEAGLSKGDIDEIIMVGGSTRLPKANQVVKEFFGKDLNKGVNPDEVVAAGAAVQAGVLRGDVKDVLLLDVTPLSLGIETLGGVMTKLIDKGTTIPVKKSQVFSTADDNQPAVSIHVCQGEREFAKDNKSLGMFELSDIPAAPRGVPQIEVTFDIDANGVLNVSAKDKGTGKENKITISGSSGLSDAEIEKMVAEAEANKEADAKKKAVIEVRNQADALLHSTRKTLEENENAISEDEKKAIIDAAADLEETLKDENATKEQIEEKLKTLTDKSHKLAEAMYKKEQGEQAGAQPNQKAKKDDDDVIDAEVE</sequence>
<comment type="function">
    <text evidence="1">Acts as a chaperone.</text>
</comment>
<comment type="induction">
    <text evidence="1">By stress conditions e.g. heat shock.</text>
</comment>
<comment type="similarity">
    <text evidence="1">Belongs to the heat shock protein 70 family.</text>
</comment>
<reference key="1">
    <citation type="journal article" date="2007" name="PLoS ONE">
        <title>The complete genome sequence and analysis of the Epsilonproteobacterium Arcobacter butzleri.</title>
        <authorList>
            <person name="Miller W.G."/>
            <person name="Parker C.T."/>
            <person name="Rubenfield M."/>
            <person name="Mendz G.L."/>
            <person name="Woesten M.M.S.M."/>
            <person name="Ussery D.W."/>
            <person name="Stolz J.F."/>
            <person name="Binnewies T.T."/>
            <person name="Hallin P.F."/>
            <person name="Wang G."/>
            <person name="Malek J.A."/>
            <person name="Rogosin A."/>
            <person name="Stanker L.H."/>
            <person name="Mandrell R.E."/>
        </authorList>
    </citation>
    <scope>NUCLEOTIDE SEQUENCE [LARGE SCALE GENOMIC DNA]</scope>
    <source>
        <strain>RM4018</strain>
    </source>
</reference>
<accession>A8EWT6</accession>
<gene>
    <name evidence="1" type="primary">dnaK</name>
    <name type="ordered locus">Abu_2195</name>
</gene>
<proteinExistence type="inferred from homology"/>
<protein>
    <recommendedName>
        <fullName evidence="1">Chaperone protein DnaK</fullName>
    </recommendedName>
    <alternativeName>
        <fullName evidence="1">HSP70</fullName>
    </alternativeName>
    <alternativeName>
        <fullName evidence="1">Heat shock 70 kDa protein</fullName>
    </alternativeName>
    <alternativeName>
        <fullName evidence="1">Heat shock protein 70</fullName>
    </alternativeName>
</protein>
<organism>
    <name type="scientific">Aliarcobacter butzleri (strain RM4018)</name>
    <name type="common">Arcobacter butzleri</name>
    <dbReference type="NCBI Taxonomy" id="367737"/>
    <lineage>
        <taxon>Bacteria</taxon>
        <taxon>Pseudomonadati</taxon>
        <taxon>Campylobacterota</taxon>
        <taxon>Epsilonproteobacteria</taxon>
        <taxon>Campylobacterales</taxon>
        <taxon>Arcobacteraceae</taxon>
        <taxon>Aliarcobacter</taxon>
    </lineage>
</organism>
<keyword id="KW-0067">ATP-binding</keyword>
<keyword id="KW-0143">Chaperone</keyword>
<keyword id="KW-0547">Nucleotide-binding</keyword>
<keyword id="KW-0597">Phosphoprotein</keyword>
<keyword id="KW-1185">Reference proteome</keyword>
<keyword id="KW-0346">Stress response</keyword>
<feature type="chain" id="PRO_1000059505" description="Chaperone protein DnaK">
    <location>
        <begin position="1"/>
        <end position="628"/>
    </location>
</feature>
<feature type="region of interest" description="Disordered" evidence="2">
    <location>
        <begin position="595"/>
        <end position="628"/>
    </location>
</feature>
<feature type="compositionally biased region" description="Basic and acidic residues" evidence="2">
    <location>
        <begin position="595"/>
        <end position="604"/>
    </location>
</feature>
<feature type="modified residue" description="Phosphothreonine; by autocatalysis" evidence="1">
    <location>
        <position position="197"/>
    </location>
</feature>
<name>DNAK_ALIB4</name>
<dbReference type="EMBL" id="CP000361">
    <property type="protein sequence ID" value="ABV68409.1"/>
    <property type="molecule type" value="Genomic_DNA"/>
</dbReference>
<dbReference type="RefSeq" id="WP_004511080.1">
    <property type="nucleotide sequence ID" value="NC_009850.1"/>
</dbReference>
<dbReference type="SMR" id="A8EWT6"/>
<dbReference type="STRING" id="367737.Abu_2195"/>
<dbReference type="GeneID" id="24305088"/>
<dbReference type="KEGG" id="abu:Abu_2195"/>
<dbReference type="eggNOG" id="COG0443">
    <property type="taxonomic scope" value="Bacteria"/>
</dbReference>
<dbReference type="HOGENOM" id="CLU_005965_2_1_7"/>
<dbReference type="Proteomes" id="UP000001136">
    <property type="component" value="Chromosome"/>
</dbReference>
<dbReference type="GO" id="GO:0005524">
    <property type="term" value="F:ATP binding"/>
    <property type="evidence" value="ECO:0007669"/>
    <property type="project" value="UniProtKB-UniRule"/>
</dbReference>
<dbReference type="GO" id="GO:0140662">
    <property type="term" value="F:ATP-dependent protein folding chaperone"/>
    <property type="evidence" value="ECO:0007669"/>
    <property type="project" value="InterPro"/>
</dbReference>
<dbReference type="GO" id="GO:0051082">
    <property type="term" value="F:unfolded protein binding"/>
    <property type="evidence" value="ECO:0007669"/>
    <property type="project" value="InterPro"/>
</dbReference>
<dbReference type="CDD" id="cd10234">
    <property type="entry name" value="ASKHA_NBD_HSP70_DnaK-like"/>
    <property type="match status" value="1"/>
</dbReference>
<dbReference type="FunFam" id="2.60.34.10:FF:000014">
    <property type="entry name" value="Chaperone protein DnaK HSP70"/>
    <property type="match status" value="1"/>
</dbReference>
<dbReference type="FunFam" id="1.20.1270.10:FF:000001">
    <property type="entry name" value="Molecular chaperone DnaK"/>
    <property type="match status" value="1"/>
</dbReference>
<dbReference type="FunFam" id="3.30.420.40:FF:000004">
    <property type="entry name" value="Molecular chaperone DnaK"/>
    <property type="match status" value="1"/>
</dbReference>
<dbReference type="FunFam" id="3.90.640.10:FF:000003">
    <property type="entry name" value="Molecular chaperone DnaK"/>
    <property type="match status" value="1"/>
</dbReference>
<dbReference type="Gene3D" id="1.20.1270.10">
    <property type="match status" value="1"/>
</dbReference>
<dbReference type="Gene3D" id="3.30.420.40">
    <property type="match status" value="2"/>
</dbReference>
<dbReference type="Gene3D" id="3.90.640.10">
    <property type="entry name" value="Actin, Chain A, domain 4"/>
    <property type="match status" value="1"/>
</dbReference>
<dbReference type="Gene3D" id="2.60.34.10">
    <property type="entry name" value="Substrate Binding Domain Of DNAk, Chain A, domain 1"/>
    <property type="match status" value="1"/>
</dbReference>
<dbReference type="HAMAP" id="MF_00332">
    <property type="entry name" value="DnaK"/>
    <property type="match status" value="1"/>
</dbReference>
<dbReference type="InterPro" id="IPR043129">
    <property type="entry name" value="ATPase_NBD"/>
</dbReference>
<dbReference type="InterPro" id="IPR012725">
    <property type="entry name" value="Chaperone_DnaK"/>
</dbReference>
<dbReference type="InterPro" id="IPR018181">
    <property type="entry name" value="Heat_shock_70_CS"/>
</dbReference>
<dbReference type="InterPro" id="IPR029048">
    <property type="entry name" value="HSP70_C_sf"/>
</dbReference>
<dbReference type="InterPro" id="IPR029047">
    <property type="entry name" value="HSP70_peptide-bd_sf"/>
</dbReference>
<dbReference type="InterPro" id="IPR013126">
    <property type="entry name" value="Hsp_70_fam"/>
</dbReference>
<dbReference type="NCBIfam" id="NF001413">
    <property type="entry name" value="PRK00290.1"/>
    <property type="match status" value="1"/>
</dbReference>
<dbReference type="NCBIfam" id="NF003520">
    <property type="entry name" value="PRK05183.1"/>
    <property type="match status" value="1"/>
</dbReference>
<dbReference type="NCBIfam" id="TIGR02350">
    <property type="entry name" value="prok_dnaK"/>
    <property type="match status" value="1"/>
</dbReference>
<dbReference type="PANTHER" id="PTHR19375">
    <property type="entry name" value="HEAT SHOCK PROTEIN 70KDA"/>
    <property type="match status" value="1"/>
</dbReference>
<dbReference type="Pfam" id="PF00012">
    <property type="entry name" value="HSP70"/>
    <property type="match status" value="1"/>
</dbReference>
<dbReference type="PRINTS" id="PR00301">
    <property type="entry name" value="HEATSHOCK70"/>
</dbReference>
<dbReference type="SUPFAM" id="SSF53067">
    <property type="entry name" value="Actin-like ATPase domain"/>
    <property type="match status" value="2"/>
</dbReference>
<dbReference type="SUPFAM" id="SSF100934">
    <property type="entry name" value="Heat shock protein 70kD (HSP70), C-terminal subdomain"/>
    <property type="match status" value="1"/>
</dbReference>
<dbReference type="SUPFAM" id="SSF100920">
    <property type="entry name" value="Heat shock protein 70kD (HSP70), peptide-binding domain"/>
    <property type="match status" value="1"/>
</dbReference>
<dbReference type="PROSITE" id="PS00297">
    <property type="entry name" value="HSP70_1"/>
    <property type="match status" value="1"/>
</dbReference>
<dbReference type="PROSITE" id="PS00329">
    <property type="entry name" value="HSP70_2"/>
    <property type="match status" value="1"/>
</dbReference>